<proteinExistence type="evidence at protein level"/>
<accession>O13734</accession>
<accession>Q9UU02</accession>
<sequence>MSKASLSPNVEDLKKKQIRQYKEIIRISKAQSIRIKELQLENERLLSENIDLRTTAINLEEQLETVQNENEENKTKLAALLNRFHEETDNFLSKLSLCQQEIQDTFKPVEANLAYDVDTDSEDLDEESVVKDTEEIIEQAQHDVSLRNLSGIEDENIIDDGETAINEQKKREANVFSDTQSAPQLKSGKALPADFENPYNLSNSKPVNNNNEDRVEAVTSENKSIDSAPQEKNHEYEIVSPKSLSNKINNQAAAQRRTEEDNANGVAQEENEGSQEAHFHSRIQSDTVIQSTPTKRKWDVDIQNKQINLASAATNVTGYVSETDSRPNRANSLDSAVLLVQSSNKSNRNGHHISDPNLNSSISLKFAPEDTAHNSLTSQENVGPQVTTTSLSNMTVAESPRTDTPREINGLVDSSVTNGNEKFSVEIMNDSNKIGLNPKSFTDEEREILTLFRNPPMRLSSEPPSSNGFSIAHPNNSPLRPPSLQGILNAEDRPYEIEPSRSSFATNDTGSYNNLELLSSVTNLKSPNENDRVTKTQSRRETKVKRRRKARIQETSEESTVVNEPNEKPDGRSRRERKKVNYALPGLRTKLRRNFDLPSDHVKAKKTRRAPKNSENDSATKTETANITSEAPTTSEVTLENSETLNL</sequence>
<gene>
    <name type="primary">sgo2</name>
    <name type="ORF">SPAC15A10.15</name>
</gene>
<feature type="chain" id="PRO_0000055452" description="Shugoshin-2">
    <location>
        <begin position="1"/>
        <end position="647"/>
    </location>
</feature>
<feature type="region of interest" description="Disordered" evidence="2">
    <location>
        <begin position="171"/>
        <end position="295"/>
    </location>
</feature>
<feature type="region of interest" description="Disordered" evidence="2">
    <location>
        <begin position="375"/>
        <end position="416"/>
    </location>
</feature>
<feature type="region of interest" description="Disordered" evidence="2">
    <location>
        <begin position="453"/>
        <end position="486"/>
    </location>
</feature>
<feature type="region of interest" description="Disordered" evidence="2">
    <location>
        <begin position="522"/>
        <end position="579"/>
    </location>
</feature>
<feature type="region of interest" description="Disordered" evidence="2">
    <location>
        <begin position="593"/>
        <end position="647"/>
    </location>
</feature>
<feature type="coiled-coil region" evidence="1">
    <location>
        <begin position="28"/>
        <end position="87"/>
    </location>
</feature>
<feature type="coiled-coil region" evidence="1">
    <location>
        <begin position="125"/>
        <end position="145"/>
    </location>
</feature>
<feature type="compositionally biased region" description="Low complexity" evidence="2">
    <location>
        <begin position="200"/>
        <end position="210"/>
    </location>
</feature>
<feature type="compositionally biased region" description="Polar residues" evidence="2">
    <location>
        <begin position="242"/>
        <end position="253"/>
    </location>
</feature>
<feature type="compositionally biased region" description="Polar residues" evidence="2">
    <location>
        <begin position="282"/>
        <end position="293"/>
    </location>
</feature>
<feature type="compositionally biased region" description="Polar residues" evidence="2">
    <location>
        <begin position="375"/>
        <end position="396"/>
    </location>
</feature>
<feature type="compositionally biased region" description="Polar residues" evidence="2">
    <location>
        <begin position="462"/>
        <end position="478"/>
    </location>
</feature>
<feature type="compositionally biased region" description="Basic and acidic residues" evidence="2">
    <location>
        <begin position="528"/>
        <end position="541"/>
    </location>
</feature>
<feature type="compositionally biased region" description="Basic and acidic residues" evidence="2">
    <location>
        <begin position="593"/>
        <end position="602"/>
    </location>
</feature>
<feature type="compositionally biased region" description="Polar residues" evidence="2">
    <location>
        <begin position="621"/>
        <end position="647"/>
    </location>
</feature>
<feature type="modified residue" description="Phosphoserine" evidence="6">
    <location>
        <position position="7"/>
    </location>
</feature>
<feature type="modified residue" description="Phosphoserine" evidence="6">
    <location>
        <position position="240"/>
    </location>
</feature>
<feature type="modified residue" description="Phosphothreonine" evidence="6">
    <location>
        <position position="292"/>
    </location>
</feature>
<feature type="modified residue" description="Phosphoserine" evidence="6">
    <location>
        <position position="332"/>
    </location>
</feature>
<feature type="modified residue" description="Phosphoserine" evidence="6">
    <location>
        <position position="335"/>
    </location>
</feature>
<protein>
    <recommendedName>
        <fullName>Shugoshin-2</fullName>
    </recommendedName>
</protein>
<dbReference type="EMBL" id="CU329670">
    <property type="protein sequence ID" value="CAB10111.1"/>
    <property type="molecule type" value="Genomic_DNA"/>
</dbReference>
<dbReference type="EMBL" id="AB027892">
    <property type="protein sequence ID" value="BAA87196.1"/>
    <property type="molecule type" value="Genomic_DNA"/>
</dbReference>
<dbReference type="PIR" id="T37714">
    <property type="entry name" value="T37714"/>
</dbReference>
<dbReference type="RefSeq" id="NP_594301.1">
    <property type="nucleotide sequence ID" value="NM_001019724.2"/>
</dbReference>
<dbReference type="SMR" id="O13734"/>
<dbReference type="BioGRID" id="279237">
    <property type="interactions" value="27"/>
</dbReference>
<dbReference type="DIP" id="DIP-59226N"/>
<dbReference type="FunCoup" id="O13734">
    <property type="interactions" value="1"/>
</dbReference>
<dbReference type="IntAct" id="O13734">
    <property type="interactions" value="1"/>
</dbReference>
<dbReference type="STRING" id="284812.O13734"/>
<dbReference type="iPTMnet" id="O13734"/>
<dbReference type="PaxDb" id="4896-SPAC15A10.15.1"/>
<dbReference type="EnsemblFungi" id="SPAC15A10.15.1">
    <property type="protein sequence ID" value="SPAC15A10.15.1:pep"/>
    <property type="gene ID" value="SPAC15A10.15"/>
</dbReference>
<dbReference type="GeneID" id="2542788"/>
<dbReference type="KEGG" id="spo:2542788"/>
<dbReference type="PomBase" id="SPAC15A10.15">
    <property type="gene designation" value="sgo2"/>
</dbReference>
<dbReference type="VEuPathDB" id="FungiDB:SPAC15A10.15"/>
<dbReference type="HOGENOM" id="CLU_455727_0_0_1"/>
<dbReference type="InParanoid" id="O13734"/>
<dbReference type="OMA" id="TKMRRDF"/>
<dbReference type="PhylomeDB" id="O13734"/>
<dbReference type="PRO" id="PR:O13734"/>
<dbReference type="Proteomes" id="UP000002485">
    <property type="component" value="Chromosome I"/>
</dbReference>
<dbReference type="GO" id="GO:0000775">
    <property type="term" value="C:chromosome, centromeric region"/>
    <property type="evidence" value="ECO:0000314"/>
    <property type="project" value="PomBase"/>
</dbReference>
<dbReference type="GO" id="GO:0099115">
    <property type="term" value="C:chromosome, subtelomeric region"/>
    <property type="evidence" value="ECO:0000314"/>
    <property type="project" value="PomBase"/>
</dbReference>
<dbReference type="GO" id="GO:0005737">
    <property type="term" value="C:cytoplasm"/>
    <property type="evidence" value="ECO:0007005"/>
    <property type="project" value="PomBase"/>
</dbReference>
<dbReference type="GO" id="GO:0000776">
    <property type="term" value="C:kinetochore"/>
    <property type="evidence" value="ECO:0000314"/>
    <property type="project" value="PomBase"/>
</dbReference>
<dbReference type="GO" id="GO:0072687">
    <property type="term" value="C:meiotic spindle"/>
    <property type="evidence" value="ECO:0000314"/>
    <property type="project" value="PomBase"/>
</dbReference>
<dbReference type="GO" id="GO:0072686">
    <property type="term" value="C:mitotic spindle"/>
    <property type="evidence" value="ECO:0000314"/>
    <property type="project" value="PomBase"/>
</dbReference>
<dbReference type="GO" id="GO:0005634">
    <property type="term" value="C:nucleus"/>
    <property type="evidence" value="ECO:0007005"/>
    <property type="project" value="PomBase"/>
</dbReference>
<dbReference type="GO" id="GO:0005721">
    <property type="term" value="C:pericentric heterochromatin"/>
    <property type="evidence" value="ECO:0000314"/>
    <property type="project" value="PomBase"/>
</dbReference>
<dbReference type="GO" id="GO:0140463">
    <property type="term" value="F:chromatin-protein adaptor activity"/>
    <property type="evidence" value="ECO:0000353"/>
    <property type="project" value="PomBase"/>
</dbReference>
<dbReference type="GO" id="GO:0051301">
    <property type="term" value="P:cell division"/>
    <property type="evidence" value="ECO:0007669"/>
    <property type="project" value="UniProtKB-KW"/>
</dbReference>
<dbReference type="GO" id="GO:0045143">
    <property type="term" value="P:homologous chromosome segregation"/>
    <property type="evidence" value="ECO:0000315"/>
    <property type="project" value="PomBase"/>
</dbReference>
<dbReference type="GO" id="GO:1990758">
    <property type="term" value="P:mitotic sister chromatid biorientation"/>
    <property type="evidence" value="ECO:0000315"/>
    <property type="project" value="PomBase"/>
</dbReference>
<dbReference type="InterPro" id="IPR038889">
    <property type="entry name" value="Shugoshin1/2"/>
</dbReference>
<dbReference type="InterPro" id="IPR011515">
    <property type="entry name" value="Shugoshin_C"/>
</dbReference>
<dbReference type="InterPro" id="IPR011516">
    <property type="entry name" value="Shugoshin_N"/>
</dbReference>
<dbReference type="PANTHER" id="PTHR21577">
    <property type="entry name" value="SHUGOSHIN"/>
    <property type="match status" value="1"/>
</dbReference>
<dbReference type="PANTHER" id="PTHR21577:SF3">
    <property type="entry name" value="SHUGOSHIN 1-RELATED"/>
    <property type="match status" value="1"/>
</dbReference>
<dbReference type="Pfam" id="PF07557">
    <property type="entry name" value="Shugoshin_C"/>
    <property type="match status" value="1"/>
</dbReference>
<dbReference type="Pfam" id="PF07558">
    <property type="entry name" value="Shugoshin_N"/>
    <property type="match status" value="1"/>
</dbReference>
<name>SGO2_SCHPO</name>
<keyword id="KW-0131">Cell cycle</keyword>
<keyword id="KW-0132">Cell division</keyword>
<keyword id="KW-0137">Centromere</keyword>
<keyword id="KW-0158">Chromosome</keyword>
<keyword id="KW-0159">Chromosome partition</keyword>
<keyword id="KW-0175">Coiled coil</keyword>
<keyword id="KW-0469">Meiosis</keyword>
<keyword id="KW-0498">Mitosis</keyword>
<keyword id="KW-0597">Phosphoprotein</keyword>
<keyword id="KW-1185">Reference proteome</keyword>
<organism>
    <name type="scientific">Schizosaccharomyces pombe (strain 972 / ATCC 24843)</name>
    <name type="common">Fission yeast</name>
    <dbReference type="NCBI Taxonomy" id="284812"/>
    <lineage>
        <taxon>Eukaryota</taxon>
        <taxon>Fungi</taxon>
        <taxon>Dikarya</taxon>
        <taxon>Ascomycota</taxon>
        <taxon>Taphrinomycotina</taxon>
        <taxon>Schizosaccharomycetes</taxon>
        <taxon>Schizosaccharomycetales</taxon>
        <taxon>Schizosaccharomycetaceae</taxon>
        <taxon>Schizosaccharomyces</taxon>
    </lineage>
</organism>
<evidence type="ECO:0000255" key="1"/>
<evidence type="ECO:0000256" key="2">
    <source>
        <dbReference type="SAM" id="MobiDB-lite"/>
    </source>
</evidence>
<evidence type="ECO:0000269" key="3">
    <source>
    </source>
</evidence>
<evidence type="ECO:0000269" key="4">
    <source>
    </source>
</evidence>
<evidence type="ECO:0000269" key="5">
    <source>
    </source>
</evidence>
<evidence type="ECO:0000269" key="6">
    <source>
    </source>
</evidence>
<evidence type="ECO:0000305" key="7"/>
<comment type="function">
    <text evidence="3 4 5">Involved in chromosome cohesion during mitosis and meiosis by preventing premature dissociation of cohesin complex from centromeres after prophase, when most of cohesin complex dissociates from chromosomes arms. Required for faithful mitotic chromosome segregation and proper kinetochore orientation during meiosis I. In contrast to sgo1, it is dispensable for centromeric protection of rec8 during meiosis I as well as protection of rad21 during mitosis. Required to sense the lack of tension at centromeres during mitosis.</text>
</comment>
<comment type="interaction">
    <interactant intactId="EBI-15872428">
        <id>O13734</id>
    </interactant>
    <interactant intactId="EBI-15872259">
        <id>O14064</id>
        <label>bir1</label>
    </interactant>
    <organismsDiffer>false</organismsDiffer>
    <experiments>3</experiments>
</comment>
<comment type="subcellular location">
    <subcellularLocation>
        <location evidence="3 4">Chromosome</location>
        <location evidence="3 4">Centromere</location>
    </subcellularLocation>
    <text evidence="3">Localizes to the centromere. Bub1 is required for centromeric localization (PubMed:14730319). At the onset of anaphase I, Sgo1 decreases markedly (PubMed:14730319).</text>
</comment>
<comment type="developmental stage">
    <text evidence="3">Present throughout the mitotic and meiotic cell cycle.</text>
</comment>
<comment type="miscellaneous">
    <text>'Shugoshin' means 'guardian spirit' in Japanese.</text>
</comment>
<comment type="similarity">
    <text evidence="7">Belongs to the shugoshin family.</text>
</comment>
<reference key="1">
    <citation type="journal article" date="2002" name="Nature">
        <title>The genome sequence of Schizosaccharomyces pombe.</title>
        <authorList>
            <person name="Wood V."/>
            <person name="Gwilliam R."/>
            <person name="Rajandream M.A."/>
            <person name="Lyne M.H."/>
            <person name="Lyne R."/>
            <person name="Stewart A."/>
            <person name="Sgouros J.G."/>
            <person name="Peat N."/>
            <person name="Hayles J."/>
            <person name="Baker S.G."/>
            <person name="Basham D."/>
            <person name="Bowman S."/>
            <person name="Brooks K."/>
            <person name="Brown D."/>
            <person name="Brown S."/>
            <person name="Chillingworth T."/>
            <person name="Churcher C.M."/>
            <person name="Collins M."/>
            <person name="Connor R."/>
            <person name="Cronin A."/>
            <person name="Davis P."/>
            <person name="Feltwell T."/>
            <person name="Fraser A."/>
            <person name="Gentles S."/>
            <person name="Goble A."/>
            <person name="Hamlin N."/>
            <person name="Harris D.E."/>
            <person name="Hidalgo J."/>
            <person name="Hodgson G."/>
            <person name="Holroyd S."/>
            <person name="Hornsby T."/>
            <person name="Howarth S."/>
            <person name="Huckle E.J."/>
            <person name="Hunt S."/>
            <person name="Jagels K."/>
            <person name="James K.D."/>
            <person name="Jones L."/>
            <person name="Jones M."/>
            <person name="Leather S."/>
            <person name="McDonald S."/>
            <person name="McLean J."/>
            <person name="Mooney P."/>
            <person name="Moule S."/>
            <person name="Mungall K.L."/>
            <person name="Murphy L.D."/>
            <person name="Niblett D."/>
            <person name="Odell C."/>
            <person name="Oliver K."/>
            <person name="O'Neil S."/>
            <person name="Pearson D."/>
            <person name="Quail M.A."/>
            <person name="Rabbinowitsch E."/>
            <person name="Rutherford K.M."/>
            <person name="Rutter S."/>
            <person name="Saunders D."/>
            <person name="Seeger K."/>
            <person name="Sharp S."/>
            <person name="Skelton J."/>
            <person name="Simmonds M.N."/>
            <person name="Squares R."/>
            <person name="Squares S."/>
            <person name="Stevens K."/>
            <person name="Taylor K."/>
            <person name="Taylor R.G."/>
            <person name="Tivey A."/>
            <person name="Walsh S.V."/>
            <person name="Warren T."/>
            <person name="Whitehead S."/>
            <person name="Woodward J.R."/>
            <person name="Volckaert G."/>
            <person name="Aert R."/>
            <person name="Robben J."/>
            <person name="Grymonprez B."/>
            <person name="Weltjens I."/>
            <person name="Vanstreels E."/>
            <person name="Rieger M."/>
            <person name="Schaefer M."/>
            <person name="Mueller-Auer S."/>
            <person name="Gabel C."/>
            <person name="Fuchs M."/>
            <person name="Duesterhoeft A."/>
            <person name="Fritzc C."/>
            <person name="Holzer E."/>
            <person name="Moestl D."/>
            <person name="Hilbert H."/>
            <person name="Borzym K."/>
            <person name="Langer I."/>
            <person name="Beck A."/>
            <person name="Lehrach H."/>
            <person name="Reinhardt R."/>
            <person name="Pohl T.M."/>
            <person name="Eger P."/>
            <person name="Zimmermann W."/>
            <person name="Wedler H."/>
            <person name="Wambutt R."/>
            <person name="Purnelle B."/>
            <person name="Goffeau A."/>
            <person name="Cadieu E."/>
            <person name="Dreano S."/>
            <person name="Gloux S."/>
            <person name="Lelaure V."/>
            <person name="Mottier S."/>
            <person name="Galibert F."/>
            <person name="Aves S.J."/>
            <person name="Xiang Z."/>
            <person name="Hunt C."/>
            <person name="Moore K."/>
            <person name="Hurst S.M."/>
            <person name="Lucas M."/>
            <person name="Rochet M."/>
            <person name="Gaillardin C."/>
            <person name="Tallada V.A."/>
            <person name="Garzon A."/>
            <person name="Thode G."/>
            <person name="Daga R.R."/>
            <person name="Cruzado L."/>
            <person name="Jimenez J."/>
            <person name="Sanchez M."/>
            <person name="del Rey F."/>
            <person name="Benito J."/>
            <person name="Dominguez A."/>
            <person name="Revuelta J.L."/>
            <person name="Moreno S."/>
            <person name="Armstrong J."/>
            <person name="Forsburg S.L."/>
            <person name="Cerutti L."/>
            <person name="Lowe T."/>
            <person name="McCombie W.R."/>
            <person name="Paulsen I."/>
            <person name="Potashkin J."/>
            <person name="Shpakovski G.V."/>
            <person name="Ussery D."/>
            <person name="Barrell B.G."/>
            <person name="Nurse P."/>
        </authorList>
    </citation>
    <scope>NUCLEOTIDE SEQUENCE [LARGE SCALE GENOMIC DNA]</scope>
    <source>
        <strain>972 / ATCC 24843</strain>
    </source>
</reference>
<reference key="2">
    <citation type="journal article" date="2000" name="Genes Cells">
        <title>Large-scale screening of intracellular protein localization in living fission yeast cells by the use of a GFP-fusion genomic DNA library.</title>
        <authorList>
            <person name="Ding D.-Q."/>
            <person name="Tomita Y."/>
            <person name="Yamamoto A."/>
            <person name="Chikashige Y."/>
            <person name="Haraguchi T."/>
            <person name="Hiraoka Y."/>
        </authorList>
    </citation>
    <scope>NUCLEOTIDE SEQUENCE [LARGE SCALE GENOMIC DNA] OF 315-492</scope>
    <scope>SUBCELLULAR LOCATION</scope>
    <source>
        <strain>ATCC 38364 / 968</strain>
    </source>
</reference>
<reference key="3">
    <citation type="journal article" date="2004" name="Nature">
        <title>The conserved kinetochore protein shugoshin protects centromeric cohesion during meiosis.</title>
        <authorList>
            <person name="Kitajima T.S."/>
            <person name="Kawashima S.A."/>
            <person name="Watanabe Y."/>
        </authorList>
    </citation>
    <scope>FUNCTION</scope>
    <scope>SUBCELLULAR LOCATION</scope>
    <scope>DEVELOPMENTAL STAGE</scope>
</reference>
<reference key="4">
    <citation type="journal article" date="2004" name="Curr. Biol.">
        <title>Two fission yeast homologs of Drosophila Mei-S332 are required for chromosome segregation during meiosis I and II.</title>
        <authorList>
            <person name="Rabitsch K.P."/>
            <person name="Gregan J."/>
            <person name="Schleiffer A."/>
            <person name="Javerzat J.-P."/>
            <person name="Eisenhaber F."/>
            <person name="Nasmyth K."/>
        </authorList>
    </citation>
    <scope>FUNCTION</scope>
    <scope>SUBCELLULAR LOCATION</scope>
</reference>
<reference key="5">
    <citation type="journal article" date="2005" name="Curr. Opin. Cell Biol.">
        <title>Shugoshin: guardian spirit at the centromere.</title>
        <authorList>
            <person name="Watanabe Y."/>
        </authorList>
    </citation>
    <scope>FUNCTION</scope>
</reference>
<reference key="6">
    <citation type="journal article" date="2008" name="J. Proteome Res.">
        <title>Phosphoproteome analysis of fission yeast.</title>
        <authorList>
            <person name="Wilson-Grady J.T."/>
            <person name="Villen J."/>
            <person name="Gygi S.P."/>
        </authorList>
    </citation>
    <scope>PHOSPHORYLATION [LARGE SCALE ANALYSIS] AT SER-7; SER-240; THR-292; SER-332 AND SER-335</scope>
    <scope>IDENTIFICATION BY MASS SPECTROMETRY</scope>
</reference>